<evidence type="ECO:0000255" key="1">
    <source>
        <dbReference type="HAMAP-Rule" id="MF_00049"/>
    </source>
</evidence>
<reference key="1">
    <citation type="journal article" date="2003" name="Nucleic Acids Res.">
        <title>The complete genome sequence and analysis of Corynebacterium diphtheriae NCTC13129.</title>
        <authorList>
            <person name="Cerdeno-Tarraga A.-M."/>
            <person name="Efstratiou A."/>
            <person name="Dover L.G."/>
            <person name="Holden M.T.G."/>
            <person name="Pallen M.J."/>
            <person name="Bentley S.D."/>
            <person name="Besra G.S."/>
            <person name="Churcher C.M."/>
            <person name="James K.D."/>
            <person name="De Zoysa A."/>
            <person name="Chillingworth T."/>
            <person name="Cronin A."/>
            <person name="Dowd L."/>
            <person name="Feltwell T."/>
            <person name="Hamlin N."/>
            <person name="Holroyd S."/>
            <person name="Jagels K."/>
            <person name="Moule S."/>
            <person name="Quail M.A."/>
            <person name="Rabbinowitsch E."/>
            <person name="Rutherford K.M."/>
            <person name="Thomson N.R."/>
            <person name="Unwin L."/>
            <person name="Whitehead S."/>
            <person name="Barrell B.G."/>
            <person name="Parkhill J."/>
        </authorList>
    </citation>
    <scope>NUCLEOTIDE SEQUENCE [LARGE SCALE GENOMIC DNA]</scope>
    <source>
        <strain>ATCC 700971 / NCTC 13129 / Biotype gravis</strain>
    </source>
</reference>
<organism>
    <name type="scientific">Corynebacterium diphtheriae (strain ATCC 700971 / NCTC 13129 / Biotype gravis)</name>
    <dbReference type="NCBI Taxonomy" id="257309"/>
    <lineage>
        <taxon>Bacteria</taxon>
        <taxon>Bacillati</taxon>
        <taxon>Actinomycetota</taxon>
        <taxon>Actinomycetes</taxon>
        <taxon>Mycobacteriales</taxon>
        <taxon>Corynebacteriaceae</taxon>
        <taxon>Corynebacterium</taxon>
    </lineage>
</organism>
<accession>Q6NEF5</accession>
<name>SYL_CORDI</name>
<protein>
    <recommendedName>
        <fullName evidence="1">Leucine--tRNA ligase</fullName>
        <ecNumber evidence="1">6.1.1.4</ecNumber>
    </recommendedName>
    <alternativeName>
        <fullName evidence="1">Leucyl-tRNA synthetase</fullName>
        <shortName evidence="1">LeuRS</shortName>
    </alternativeName>
</protein>
<dbReference type="EC" id="6.1.1.4" evidence="1"/>
<dbReference type="EMBL" id="BX248360">
    <property type="protein sequence ID" value="CAE50842.1"/>
    <property type="molecule type" value="Genomic_DNA"/>
</dbReference>
<dbReference type="SMR" id="Q6NEF5"/>
<dbReference type="STRING" id="257309.DIP2320"/>
<dbReference type="KEGG" id="cdi:DIP2320"/>
<dbReference type="HOGENOM" id="CLU_004427_0_0_11"/>
<dbReference type="Proteomes" id="UP000002198">
    <property type="component" value="Chromosome"/>
</dbReference>
<dbReference type="GO" id="GO:0005829">
    <property type="term" value="C:cytosol"/>
    <property type="evidence" value="ECO:0007669"/>
    <property type="project" value="TreeGrafter"/>
</dbReference>
<dbReference type="GO" id="GO:0002161">
    <property type="term" value="F:aminoacyl-tRNA deacylase activity"/>
    <property type="evidence" value="ECO:0007669"/>
    <property type="project" value="InterPro"/>
</dbReference>
<dbReference type="GO" id="GO:0005524">
    <property type="term" value="F:ATP binding"/>
    <property type="evidence" value="ECO:0007669"/>
    <property type="project" value="UniProtKB-UniRule"/>
</dbReference>
<dbReference type="GO" id="GO:0004823">
    <property type="term" value="F:leucine-tRNA ligase activity"/>
    <property type="evidence" value="ECO:0007669"/>
    <property type="project" value="UniProtKB-UniRule"/>
</dbReference>
<dbReference type="GO" id="GO:0006429">
    <property type="term" value="P:leucyl-tRNA aminoacylation"/>
    <property type="evidence" value="ECO:0007669"/>
    <property type="project" value="UniProtKB-UniRule"/>
</dbReference>
<dbReference type="CDD" id="cd07958">
    <property type="entry name" value="Anticodon_Ia_Leu_BEm"/>
    <property type="match status" value="1"/>
</dbReference>
<dbReference type="FunFam" id="3.40.50.620:FF:000056">
    <property type="entry name" value="Leucine--tRNA ligase"/>
    <property type="match status" value="1"/>
</dbReference>
<dbReference type="FunFam" id="3.40.50.620:FF:000060">
    <property type="entry name" value="Leucine--tRNA ligase"/>
    <property type="match status" value="1"/>
</dbReference>
<dbReference type="FunFam" id="3.40.50.620:FF:000087">
    <property type="entry name" value="Leucine--tRNA ligase"/>
    <property type="match status" value="1"/>
</dbReference>
<dbReference type="FunFam" id="1.10.730.10:FF:000011">
    <property type="entry name" value="Leucine--tRNA ligase chloroplastic/mitochondrial"/>
    <property type="match status" value="1"/>
</dbReference>
<dbReference type="Gene3D" id="3.40.50.620">
    <property type="entry name" value="HUPs"/>
    <property type="match status" value="3"/>
</dbReference>
<dbReference type="Gene3D" id="1.10.730.10">
    <property type="entry name" value="Isoleucyl-tRNA Synthetase, Domain 1"/>
    <property type="match status" value="1"/>
</dbReference>
<dbReference type="HAMAP" id="MF_00049_B">
    <property type="entry name" value="Leu_tRNA_synth_B"/>
    <property type="match status" value="1"/>
</dbReference>
<dbReference type="InterPro" id="IPR001412">
    <property type="entry name" value="aa-tRNA-synth_I_CS"/>
</dbReference>
<dbReference type="InterPro" id="IPR002302">
    <property type="entry name" value="Leu-tRNA-ligase"/>
</dbReference>
<dbReference type="InterPro" id="IPR025709">
    <property type="entry name" value="Leu_tRNA-synth_edit"/>
</dbReference>
<dbReference type="InterPro" id="IPR013155">
    <property type="entry name" value="M/V/L/I-tRNA-synth_anticd-bd"/>
</dbReference>
<dbReference type="InterPro" id="IPR015413">
    <property type="entry name" value="Methionyl/Leucyl_tRNA_Synth"/>
</dbReference>
<dbReference type="InterPro" id="IPR014729">
    <property type="entry name" value="Rossmann-like_a/b/a_fold"/>
</dbReference>
<dbReference type="InterPro" id="IPR009080">
    <property type="entry name" value="tRNAsynth_Ia_anticodon-bd"/>
</dbReference>
<dbReference type="InterPro" id="IPR009008">
    <property type="entry name" value="Val/Leu/Ile-tRNA-synth_edit"/>
</dbReference>
<dbReference type="NCBIfam" id="TIGR00396">
    <property type="entry name" value="leuS_bact"/>
    <property type="match status" value="1"/>
</dbReference>
<dbReference type="PANTHER" id="PTHR43740:SF2">
    <property type="entry name" value="LEUCINE--TRNA LIGASE, MITOCHONDRIAL"/>
    <property type="match status" value="1"/>
</dbReference>
<dbReference type="PANTHER" id="PTHR43740">
    <property type="entry name" value="LEUCYL-TRNA SYNTHETASE"/>
    <property type="match status" value="1"/>
</dbReference>
<dbReference type="Pfam" id="PF08264">
    <property type="entry name" value="Anticodon_1"/>
    <property type="match status" value="1"/>
</dbReference>
<dbReference type="Pfam" id="PF13603">
    <property type="entry name" value="tRNA-synt_1_2"/>
    <property type="match status" value="1"/>
</dbReference>
<dbReference type="Pfam" id="PF09334">
    <property type="entry name" value="tRNA-synt_1g"/>
    <property type="match status" value="1"/>
</dbReference>
<dbReference type="PRINTS" id="PR00985">
    <property type="entry name" value="TRNASYNTHLEU"/>
</dbReference>
<dbReference type="SUPFAM" id="SSF47323">
    <property type="entry name" value="Anticodon-binding domain of a subclass of class I aminoacyl-tRNA synthetases"/>
    <property type="match status" value="1"/>
</dbReference>
<dbReference type="SUPFAM" id="SSF52374">
    <property type="entry name" value="Nucleotidylyl transferase"/>
    <property type="match status" value="1"/>
</dbReference>
<dbReference type="SUPFAM" id="SSF50677">
    <property type="entry name" value="ValRS/IleRS/LeuRS editing domain"/>
    <property type="match status" value="1"/>
</dbReference>
<dbReference type="PROSITE" id="PS00178">
    <property type="entry name" value="AA_TRNA_LIGASE_I"/>
    <property type="match status" value="1"/>
</dbReference>
<sequence length="960" mass="107162">MTMTNPSGNTPDTSAGPAFRYTAELAGEIERSWQQYWIDNGTFNAPNPVGDLAVSGDKLPEDKLFVQDMFPYPSGAGLHVGHPLGYIATDVFARFNRMLGKNVLHTLGYDAFGLPAEQYAIQTGTHPRTTTMANIANMQRQLGALGLGHDPRRSVATTDPEFYKWTQWIFLQIFNAWFDTKQQKARPISELIPLLESGEVALPEGFEGSADSYSELDAVEKAKVVDEFRLVYRSHSMVNWCPGLGTVLANEEVTADGRSERGNFPVFRKKLSQWMMRITAYSDRLIDDLDLLDWPDKVKSMQRNWIGRSRGAEVDFDALGHTITVFTTRPDTLFGASYMVLAPEHELVDALVAAGTNSYEGIDPRWTFGQATPAEAVKAYRASIAAKSDLERQENKEKTGVYLGVNAVNPVNGESIPVFIGDYVLTGYGTGAIMAVPAHDTRDYEFATEFGLPIREVVAGGNIAEAAYTESGAAVNSANDQGLDINGLDKQEAIAQVIEWLVDKQKGSEKIQYKLRDWLFARQRYWGEPFPVVYDENGLAHALPESMLPVELPEVEDYKPVSFDPDDADSEPHPPLAKATEWTQVELDLGDGLKKYTRDTNVMPQWAGSSWYQLRYIDPTNSEAFCDIENERYWTGPRSAEDSGGVDLYVGGVEHAVLHLLYSRFWHKVLFDLGFVTSREPYRRLFNQGYIQAFAYTDSRGVYVPAEEVEEKDGKFYYQGEEVNQEYGKMGKSLKNAVAPDDICRDFGADTLRVYEMAMGPLDTSRPWSTKDVIGAHRFLQRLWRLVVSEDDGSIVVTDAALTDDDLKQLHRTIAGMRDDYEGLRINTVVAKAIEYVNYLTKAYGSTGAPRAAVEPLVIMVAAVAPHIAEELWKRLGHNDTITFVPFPEYEDKWLVDDEVEMPVQINGKVRARIMVPADASQDQISEIALASEAVATHIEGKNVIKKIVVSGRMVNLVVK</sequence>
<proteinExistence type="inferred from homology"/>
<gene>
    <name evidence="1" type="primary">leuS</name>
    <name type="ordered locus">DIP2320</name>
</gene>
<comment type="catalytic activity">
    <reaction evidence="1">
        <text>tRNA(Leu) + L-leucine + ATP = L-leucyl-tRNA(Leu) + AMP + diphosphate</text>
        <dbReference type="Rhea" id="RHEA:11688"/>
        <dbReference type="Rhea" id="RHEA-COMP:9613"/>
        <dbReference type="Rhea" id="RHEA-COMP:9622"/>
        <dbReference type="ChEBI" id="CHEBI:30616"/>
        <dbReference type="ChEBI" id="CHEBI:33019"/>
        <dbReference type="ChEBI" id="CHEBI:57427"/>
        <dbReference type="ChEBI" id="CHEBI:78442"/>
        <dbReference type="ChEBI" id="CHEBI:78494"/>
        <dbReference type="ChEBI" id="CHEBI:456215"/>
        <dbReference type="EC" id="6.1.1.4"/>
    </reaction>
</comment>
<comment type="subcellular location">
    <subcellularLocation>
        <location evidence="1">Cytoplasm</location>
    </subcellularLocation>
</comment>
<comment type="similarity">
    <text evidence="1">Belongs to the class-I aminoacyl-tRNA synthetase family.</text>
</comment>
<keyword id="KW-0030">Aminoacyl-tRNA synthetase</keyword>
<keyword id="KW-0067">ATP-binding</keyword>
<keyword id="KW-0963">Cytoplasm</keyword>
<keyword id="KW-0436">Ligase</keyword>
<keyword id="KW-0547">Nucleotide-binding</keyword>
<keyword id="KW-0648">Protein biosynthesis</keyword>
<keyword id="KW-1185">Reference proteome</keyword>
<feature type="chain" id="PRO_0000152005" description="Leucine--tRNA ligase">
    <location>
        <begin position="1"/>
        <end position="960"/>
    </location>
</feature>
<feature type="short sequence motif" description="'HIGH' region">
    <location>
        <begin position="71"/>
        <end position="82"/>
    </location>
</feature>
<feature type="short sequence motif" description="'KMSKS' region">
    <location>
        <begin position="729"/>
        <end position="733"/>
    </location>
</feature>
<feature type="binding site" evidence="1">
    <location>
        <position position="732"/>
    </location>
    <ligand>
        <name>ATP</name>
        <dbReference type="ChEBI" id="CHEBI:30616"/>
    </ligand>
</feature>